<name>PG157_VACCW</name>
<evidence type="ECO:0000256" key="1">
    <source>
        <dbReference type="SAM" id="MobiDB-lite"/>
    </source>
</evidence>
<evidence type="ECO:0000269" key="2">
    <source>
    </source>
</evidence>
<evidence type="ECO:0000269" key="3">
    <source>
    </source>
</evidence>
<evidence type="ECO:0000269" key="4">
    <source>
    </source>
</evidence>
<evidence type="ECO:0000269" key="5">
    <source>
    </source>
</evidence>
<evidence type="ECO:0000305" key="6"/>
<sequence length="77" mass="8745">MEDLNEANFSHLLINLSNNKDIDAQYASTLSVVHELLSAINFKIFNINKKSKKNSKSIEQHPVVHHAASAGREFNRR</sequence>
<proteinExistence type="evidence at protein level"/>
<feature type="chain" id="PRO_0000099306" description="Protein OPG157">
    <location>
        <begin position="1"/>
        <end position="77"/>
    </location>
</feature>
<feature type="region of interest" description="Disordered" evidence="1">
    <location>
        <begin position="53"/>
        <end position="77"/>
    </location>
</feature>
<keyword id="KW-0597">Phosphoprotein</keyword>
<keyword id="KW-1185">Reference proteome</keyword>
<organism>
    <name type="scientific">Vaccinia virus (strain Western Reserve)</name>
    <name type="common">VACV</name>
    <name type="synonym">Vaccinia virus (strain WR)</name>
    <dbReference type="NCBI Taxonomy" id="10254"/>
    <lineage>
        <taxon>Viruses</taxon>
        <taxon>Varidnaviria</taxon>
        <taxon>Bamfordvirae</taxon>
        <taxon>Nucleocytoviricota</taxon>
        <taxon>Pokkesviricetes</taxon>
        <taxon>Chitovirales</taxon>
        <taxon>Poxviridae</taxon>
        <taxon>Chordopoxvirinae</taxon>
        <taxon>Orthopoxvirus</taxon>
        <taxon>Vaccinia virus</taxon>
    </lineage>
</organism>
<organismHost>
    <name type="scientific">Bos taurus</name>
    <name type="common">Bovine</name>
    <dbReference type="NCBI Taxonomy" id="9913"/>
</organismHost>
<accession>P68596</accession>
<accession>P21088</accession>
<accession>Q76ZP5</accession>
<protein>
    <recommendedName>
        <fullName>Protein OPG157</fullName>
    </recommendedName>
</protein>
<gene>
    <name type="primary">OPG157</name>
    <name type="ordered locus">VACWR153</name>
    <name type="ORF">A30L</name>
</gene>
<dbReference type="EMBL" id="M61187">
    <property type="protein sequence ID" value="AAA48327.1"/>
    <property type="molecule type" value="Genomic_DNA"/>
</dbReference>
<dbReference type="EMBL" id="AY243312">
    <property type="protein sequence ID" value="AAO89432.1"/>
    <property type="molecule type" value="Genomic_DNA"/>
</dbReference>
<dbReference type="RefSeq" id="YP_233035.1">
    <property type="nucleotide sequence ID" value="NC_006998.1"/>
</dbReference>
<dbReference type="DNASU" id="3707683"/>
<dbReference type="GeneID" id="3707683"/>
<dbReference type="KEGG" id="vg:3707683"/>
<dbReference type="Proteomes" id="UP000000344">
    <property type="component" value="Genome"/>
</dbReference>
<dbReference type="InterPro" id="IPR009257">
    <property type="entry name" value="Chordopox_A30L"/>
</dbReference>
<dbReference type="Pfam" id="PF06015">
    <property type="entry name" value="Chordopox_A30L"/>
    <property type="match status" value="1"/>
</dbReference>
<reference key="1">
    <citation type="journal article" date="1991" name="J. Biol. Chem.">
        <title>Identification, sequence, and expression of the gene encoding a Mr 35,000 subunit of the vaccinia virus DNA-dependent RNA polymerase.</title>
        <authorList>
            <person name="Amegadzie B.Y."/>
            <person name="Ahn B.-Y."/>
            <person name="Moss B."/>
        </authorList>
    </citation>
    <scope>NUCLEOTIDE SEQUENCE [GENOMIC DNA]</scope>
</reference>
<reference key="2">
    <citation type="submission" date="2003-02" db="EMBL/GenBank/DDBJ databases">
        <title>Sequencing of the coding region of Vaccinia-WR to an average 9-fold redundancy and an error rate of 0.16/10kb.</title>
        <authorList>
            <person name="Esposito J.J."/>
            <person name="Frace A.M."/>
            <person name="Sammons S.A."/>
            <person name="Olsen-Rasmussen M."/>
            <person name="Osborne J."/>
            <person name="Wohlhueter R."/>
        </authorList>
    </citation>
    <scope>NUCLEOTIDE SEQUENCE [LARGE SCALE GENOMIC DNA]</scope>
</reference>
<reference key="3">
    <citation type="journal article" date="2001" name="J. Virol.">
        <title>Vaccinia virus A30L protein is required for association of viral membranes with dense viroplasm to form immature virions.</title>
        <authorList>
            <person name="Szajner P."/>
            <person name="Weisberg A.S."/>
            <person name="Wolffe E.J."/>
            <person name="Moss B."/>
        </authorList>
    </citation>
    <scope>FUNCTION</scope>
</reference>
<reference key="4">
    <citation type="journal article" date="2003" name="J. Virol.">
        <title>Vaccinia virus G7L protein interacts with the A30L protein and is required for association of viral membranes with dense viroplasm to form immature virions.</title>
        <authorList>
            <person name="Szajner P."/>
            <person name="Jaffe H."/>
            <person name="Weisberg A.S."/>
            <person name="Moss B."/>
        </authorList>
    </citation>
    <scope>INTERACTION WITH PROTEIN OPG092</scope>
</reference>
<reference key="5">
    <citation type="journal article" date="2004" name="J. Virol.">
        <title>Physical and functional interactions between vaccinia virus F10 protein kinase and virion assembly proteins A30 and G7.</title>
        <authorList>
            <person name="Szajner P."/>
            <person name="Weisberg A.S."/>
            <person name="Moss B."/>
        </authorList>
    </citation>
    <scope>PHOSPHORYLATION</scope>
</reference>
<reference key="6">
    <citation type="journal article" date="2006" name="Virol. J.">
        <title>Pox proteomics: mass spectrometry analysis and identification of Vaccinia virion proteins.</title>
        <authorList>
            <person name="Yoder J.D."/>
            <person name="Chen T.S."/>
            <person name="Gagnier C.R."/>
            <person name="Vemulapalli S."/>
            <person name="Maier C.S."/>
            <person name="Hruby D.E."/>
        </authorList>
    </citation>
    <scope>IDENTIFICATION BY MASS SPECTROMETRY</scope>
</reference>
<reference key="7">
    <citation type="journal article" date="2010" name="J. Virol.">
        <title>Structure/Function analysis of the vaccinia virus F18 phosphoprotein, an abundant core component required for virion maturation and infectivity.</title>
        <authorList>
            <person name="Wickramasekera N.T."/>
            <person name="Traktman P."/>
        </authorList>
    </citation>
    <scope>INTERACTION WITH PROTEIN OPG062</scope>
</reference>
<comment type="function">
    <text evidence="2">Required for the association between the dense viroplasm and the viral membranes to form the mature virion (MV).</text>
</comment>
<comment type="subunit">
    <text evidence="3 5">Interacts with protein OPG092; the interaction stabilizes both proteins (PubMed:12610117). Interacts with protein OPG062.</text>
</comment>
<comment type="PTM">
    <text evidence="4">Phosphorylated by viral OPG054 kinase.</text>
</comment>
<comment type="similarity">
    <text evidence="6">Belongs to the orthopoxvirus OPG157 family.</text>
</comment>